<gene>
    <name evidence="9" type="primary">hsa</name>
    <name type="ordered locus">SGO_0966</name>
</gene>
<reference key="1">
    <citation type="journal article" date="2002" name="Infect. Immun.">
        <title>Identification and characterization of hsa, the gene encoding the sialic acid-binding adhesin of Streptococcus gordonii DL1.</title>
        <authorList>
            <person name="Takahashi Y."/>
            <person name="Konishi K."/>
            <person name="Cisar J.O."/>
            <person name="Yoshikawa M."/>
        </authorList>
    </citation>
    <scope>NUCLEOTIDE SEQUENCE [GENOMIC DNA]</scope>
    <scope>FUNCTION</scope>
    <scope>DOMAIN</scope>
    <scope>DISRUPTION PHENOTYPE</scope>
    <source>
        <strain>Challis / ATCC 35105 / BCRC 15272 / CH1 / DL1 / V288</strain>
    </source>
</reference>
<reference key="2">
    <citation type="journal article" date="2007" name="J. Bacteriol.">
        <title>Genome-wide transcriptional changes in Streptococcus gordonii in response to competence signaling peptide.</title>
        <authorList>
            <person name="Vickerman M.M."/>
            <person name="Iobst S."/>
            <person name="Jesionowski A.M."/>
            <person name="Gill S.R."/>
        </authorList>
    </citation>
    <scope>NUCLEOTIDE SEQUENCE [LARGE SCALE GENOMIC DNA]</scope>
    <source>
        <strain>Challis / ATCC 35105 / BCRC 15272 / CH1 / DL1 / V288</strain>
    </source>
</reference>
<reference key="3">
    <citation type="journal article" date="1993" name="J. Med. Microbiol.">
        <title>Identity of viridans streptococci isolated from cases of infective endocarditis.</title>
        <authorList>
            <person name="Douglas C.W."/>
            <person name="Heath J."/>
            <person name="Hampton K.K."/>
            <person name="Preston F.E."/>
        </authorList>
    </citation>
    <scope>S.GORDONII IN INFECTIVE ENDOCARDITIS</scope>
</reference>
<reference key="4">
    <citation type="journal article" date="2004" name="Infect. Immun.">
        <title>Functional analysis of the Streptococcus gordonii DL1 sialic acid-binding adhesin and its essential role in bacterial binding to platelets.</title>
        <authorList>
            <person name="Takahashi Y."/>
            <person name="Yajima A."/>
            <person name="Cisar J.O."/>
            <person name="Konishi K."/>
        </authorList>
    </citation>
    <scope>FUNCTION</scope>
    <scope>SUBCELLULAR LOCATION</scope>
    <scope>DOMAIN</scope>
    <scope>GLYCOSYLATION</scope>
    <scope>DISRUPTION PHENOTYPE</scope>
    <source>
        <strain>Challis / ATCC 35105 / BCRC 15272 / CH1 / DL1 / V288</strain>
    </source>
</reference>
<reference key="5">
    <citation type="journal article" date="2010" name="Infect. Immun.">
        <title>Human platelets recognize a novel surface protein, PadA, on Streptococcus gordonii through a unique interaction involving fibrinogen receptor GPIIbIIIa.</title>
        <authorList>
            <person name="Petersen H.J."/>
            <person name="Keane C."/>
            <person name="Jenkinson H.F."/>
            <person name="Vickerman M.M."/>
            <person name="Jesionowski A."/>
            <person name="Waterhouse J.C."/>
            <person name="Cox D."/>
            <person name="Kerrigan S.W."/>
        </authorList>
    </citation>
    <scope>FUNCTION</scope>
    <scope>SUBCELLULAR LOCATION</scope>
    <scope>DISRUPTION PHENOTYPE</scope>
    <source>
        <strain>Challis / ATCC 35105 / BCRC 15272 / CH1 / DL1 / V288</strain>
    </source>
</reference>
<reference key="6">
    <citation type="journal article" date="2010" name="Arterioscler. Thromb. Vasc. Biol.">
        <title>Mechanism of outside-in {alpha}IIb{beta}3-mediated activation of human platelets by the colonizing Bacterium, Streptococcus gordonii.</title>
        <authorList>
            <person name="Keane C."/>
            <person name="Petersen H."/>
            <person name="Reynolds K."/>
            <person name="Newman D.K."/>
            <person name="Cox D."/>
            <person name="Jenkinson H.F."/>
            <person name="Newman P.J."/>
            <person name="Kerrigan S.W."/>
        </authorList>
    </citation>
    <scope>DISRUPTION PHENOTYPE</scope>
    <source>
        <strain>Challis / ATCC 35105 / BCRC 15272 / CH1 / DL1 / V288</strain>
    </source>
</reference>
<reference key="7">
    <citation type="journal article" date="2017" name="Cell. Microbiol.">
        <title>Concerted functions of Streptococcus gordonii surface proteins PadA and Hsa mediate activation of human platelets and interactions with extracellular matrix.</title>
        <authorList>
            <person name="Haworth J.A."/>
            <person name="Jenkinson H.F."/>
            <person name="Petersen H.J."/>
            <person name="Back C.R."/>
            <person name="Brittan J.L."/>
            <person name="Kerrigan S.W."/>
            <person name="Nobbs A.H."/>
        </authorList>
    </citation>
    <scope>FUNCTION IN ADHERENCE TO HOST CELLS AND BIOFILM FORMATION</scope>
    <scope>GLYCOSYLATION</scope>
    <scope>DISRUPTION PHENOTYPE</scope>
    <source>
        <strain>Challis / ATCC 35105 / BCRC 15272 / CH1 / DL1 / V288</strain>
    </source>
</reference>
<reference evidence="14 15" key="8">
    <citation type="submission" date="2018-08" db="PDB data bank">
        <title>Engineering sialoglycan selectivity through structure-based optimization of Siglec-like adhesins.</title>
        <authorList>
            <person name="Iverson T.M."/>
        </authorList>
    </citation>
    <scope>X-RAY CRYSTALLOGRAPHY (1.40 ANGSTROMS) OF 220-453</scope>
</reference>
<protein>
    <recommendedName>
        <fullName evidence="9">Streptococcal hemagglutinin</fullName>
    </recommendedName>
    <alternativeName>
        <fullName evidence="9">Hs antigen</fullName>
    </alternativeName>
    <alternativeName>
        <fullName evidence="10">Sialic acid-binding adhesin</fullName>
    </alternativeName>
</protein>
<accession>A8AWU7</accession>
<accession>Q9KWR3</accession>
<keyword id="KW-0002">3D-structure</keyword>
<keyword id="KW-0130">Cell adhesion</keyword>
<keyword id="KW-0134">Cell wall</keyword>
<keyword id="KW-0325">Glycoprotein</keyword>
<keyword id="KW-0572">Peptidoglycan-anchor</keyword>
<keyword id="KW-1185">Reference proteome</keyword>
<keyword id="KW-0964">Secreted</keyword>
<keyword id="KW-0732">Signal</keyword>
<keyword id="KW-0843">Virulence</keyword>
<sequence>MFFKRQKGQYHEVERVTRFKLIKSGKHWLRAATSQFGLLRLMKGADISSVEVKVAEEQSVEKGGLNYLKGIIATGAVLGGAVVTSSSVYAEEEQALEKVIDTRDVLATRGEAVLSEEAATTLSSEGANPVESLSDTLSASESASANSVSTSISISESFSVSASASLSSSSSLSQSSSESASASESLSVSASTSQSFSSTTSSTQSSNNESLISSDSSNSLNTNQSVSARNQNARVRTRRAVAANDTEAPQVKSGDYVVYRGESFEYYAEITDNSGQVNRVVIRNVEGGANSTYLSPNWVKYSTENLGRPGNATVQNPLRTRIFGEVPLNEIVNEKSYYTRYIVAWDPSGNATQMVDNANRNGLERFVLTVKSQNEKYDPADPSVTYVNNLSNLSTSEREAVAAAVRAANPNIPPTAKITVSQNGTVTITYPDKSTDTIPANRVVKDLQISKSNSASQSSSVSASQSASTSVSASISASMSASVSVSTSASTSASVSASESASTSASVSASESASTSASVSASKSSSTSASVSASESASTSASVSASESASTSASVSASESASTSASVSASTSASTSASVSASESASTSASVSASESASTSASVSASESASTSASVSASESASTSASVSASESSSTSASVSASESASTSASVSASESASTSASVSASTSASTSASVSASTSASTSASVSASTSASTSASVSASESASTSASVSASESASTSASVSASTSASTSASVSASTSASTSASVSASESASTSASVSASTSASTSASVSASESASTSASVSASTSASTSASVSASESASTSASVSASESASTSASVSASTSASTSASVSASESASTSASVSASESASTSASVSASESASTSASVSASTSASTSASVSASESASTSASVSASESASTSASVSASESASTSASVSASESASTSASVSASTSASTSASVSASESASTSASVSASESASTSASVSASESASTSASVSASESASTSASISASESASTSASVSASESASTSASVSASTSASTSASVSASESASTSASVSASESASTSASVSASESASTSASVSASESASTSASVSASESASTSASVSASTSASTSASVSASESSSTSASVSASESASTSSSVSASESASTSASVSASESASTSASVSASESASTSASVSASESASTSASVSASESASTSASVSASESASTSASVSASESASTSASVSASTSASTSASVSASESASTSASVSASESASTSASVSASTSASTSASVSASESASTSASVSASESASTSASVSASESASTSASVSASTSASTSASVSASESASTSASVSASESASMSASVSASESASTSASVSASESASTSASVSASESASTSASVSASESASTSASVSASESASTSASVSASESASTSASVSASESAYTSASASASESASTSASISASESASTSASVSASESAYTSASVSASESGSTSASVSASESASTSASVSASESASTSASVSASTSASTSASVSASESSSTSASVSASESASTSASVSASESASTSASVSASTSASTSASVSASESASTSASVSASESASTSASVSASESASTSASVSTSESASTSASVSASESASTSASVSASESASTSASVSASESSSTSASVSASESASTSASVSASESASTSASVSASESASTSASVSASESASTSVSVSASESASTSASVSASESASSSASVSASKSASMSASVLASESASTSASVSASESASTSASVSASESASTSASVSASESASTSASVSASESASTSASVSASESASTSASVSASESASTSASVSASTSASTSASVSASESASTSASVSASESASTSASVSASESASTSASVSASESVSANESASTSASVSASTSASTSASVSSSESASTSASVSASESASTSASVSASESASTSASVSASESASISASISASESSSTSASVSASESASTSASVSASTSTSTSASVSASESASTSASVFASESASTSASVSASESASTSASVSASTSASTSASVSASESASTSASISASESASTSASISASESSSTSASVSASTSASTSASVSASESTSTSVSISASESVSISTSVSQSMSVSESLSLSVSTSTLHSQLNGIYESELNSLSLSESLSMSQSLSQSLSDSQSTSATQSMHDRISKGQLPRTGESESKASILALGIGALGLAFKKRKKNESED</sequence>
<organism>
    <name type="scientific">Streptococcus gordonii (strain Challis / ATCC 35105 / BCRC 15272 / CH1 / DL1 / V288)</name>
    <dbReference type="NCBI Taxonomy" id="467705"/>
    <lineage>
        <taxon>Bacteria</taxon>
        <taxon>Bacillati</taxon>
        <taxon>Bacillota</taxon>
        <taxon>Bacilli</taxon>
        <taxon>Lactobacillales</taxon>
        <taxon>Streptococcaceae</taxon>
        <taxon>Streptococcus</taxon>
    </lineage>
</organism>
<feature type="signal peptide" evidence="13">
    <location>
        <begin position="1"/>
        <end position="90"/>
    </location>
</feature>
<feature type="chain" id="PRO_0000452687" description="Streptococcal hemagglutinin">
    <location>
        <begin position="91"/>
        <end position="2178"/>
    </location>
</feature>
<feature type="propeptide" id="PRO_5018364652" description="Removed by sortase" evidence="1">
    <location>
        <begin position="2148"/>
        <end position="2178"/>
    </location>
</feature>
<feature type="region of interest" description="Non-repeat region 1 (NR1)" evidence="3">
    <location>
        <begin position="91"/>
        <end position="137"/>
    </location>
</feature>
<feature type="region of interest" description="Ser-rich region 1 (SR1)" evidence="3">
    <location>
        <begin position="138"/>
        <end position="219"/>
    </location>
</feature>
<feature type="region of interest" description="Disordered" evidence="2">
    <location>
        <begin position="192"/>
        <end position="246"/>
    </location>
</feature>
<feature type="region of interest" description="Non-repeat region 2 (NR2)" evidence="3">
    <location>
        <begin position="220"/>
        <end position="449"/>
    </location>
</feature>
<feature type="region of interest" description="Ser-rich region 2 (SR2)" evidence="3">
    <location>
        <begin position="450"/>
        <end position="2143"/>
    </location>
</feature>
<feature type="region of interest" description="Disordered" evidence="2">
    <location>
        <begin position="495"/>
        <end position="557"/>
    </location>
</feature>
<feature type="region of interest" description="Disordered" evidence="2">
    <location>
        <begin position="584"/>
        <end position="653"/>
    </location>
</feature>
<feature type="region of interest" description="Disordered" evidence="2">
    <location>
        <begin position="836"/>
        <end position="857"/>
    </location>
</feature>
<feature type="region of interest" description="Disordered" evidence="2">
    <location>
        <begin position="884"/>
        <end position="917"/>
    </location>
</feature>
<feature type="region of interest" description="Disordered" evidence="2">
    <location>
        <begin position="944"/>
        <end position="993"/>
    </location>
</feature>
<feature type="region of interest" description="Disordered" evidence="2">
    <location>
        <begin position="1020"/>
        <end position="1289"/>
    </location>
</feature>
<feature type="region of interest" description="Disordered" evidence="2">
    <location>
        <begin position="1341"/>
        <end position="1390"/>
    </location>
</feature>
<feature type="region of interest" description="Disordered" evidence="2">
    <location>
        <begin position="1488"/>
        <end position="1685"/>
    </location>
</feature>
<feature type="region of interest" description="Disordered" evidence="2">
    <location>
        <begin position="1725"/>
        <end position="1901"/>
    </location>
</feature>
<feature type="region of interest" description="Disordered" evidence="2">
    <location>
        <begin position="2119"/>
        <end position="2151"/>
    </location>
</feature>
<feature type="short sequence motif" description="LPXTG sorting signal" evidence="1">
    <location>
        <begin position="2144"/>
        <end position="2148"/>
    </location>
</feature>
<feature type="compositionally biased region" description="Low complexity" evidence="2">
    <location>
        <begin position="192"/>
        <end position="244"/>
    </location>
</feature>
<feature type="compositionally biased region" description="Low complexity" evidence="2">
    <location>
        <begin position="2119"/>
        <end position="2130"/>
    </location>
</feature>
<feature type="modified residue" description="Pentaglycyl murein peptidoglycan amidated threonine" evidence="1">
    <location>
        <position position="2147"/>
    </location>
</feature>
<feature type="sequence conflict" description="In Ref. 1; BAA97453." evidence="11" ref="1">
    <original>DP</original>
    <variation>ES</variation>
    <location>
        <begin position="381"/>
        <end position="382"/>
    </location>
</feature>
<feature type="sequence conflict" description="In Ref. 1; BAA97453." evidence="11" ref="1">
    <original>S</original>
    <variation>Y</variation>
    <location>
        <position position="788"/>
    </location>
</feature>
<feature type="sequence conflict" description="In Ref. 1; BAA97453." evidence="11" ref="1">
    <original>S</original>
    <variation>C</variation>
    <location>
        <position position="1396"/>
    </location>
</feature>
<feature type="sequence conflict" description="In Ref. 1; BAA97453." evidence="11" ref="1">
    <original>I</original>
    <variation>V</variation>
    <location>
        <position position="1419"/>
    </location>
</feature>
<feature type="sequence conflict" description="In Ref. 1; BAA97453." evidence="11" ref="1">
    <original>SASE</original>
    <variation>CASA</variation>
    <location>
        <begin position="1492"/>
        <end position="1495"/>
    </location>
</feature>
<feature type="sequence conflict" description="In Ref. 1; BAA97453." evidence="11" ref="1">
    <original>E</original>
    <variation>G</variation>
    <location>
        <position position="1507"/>
    </location>
</feature>
<feature type="strand" evidence="19">
    <location>
        <begin position="250"/>
        <end position="252"/>
    </location>
</feature>
<feature type="strand" evidence="19">
    <location>
        <begin position="256"/>
        <end position="259"/>
    </location>
</feature>
<feature type="strand" evidence="19">
    <location>
        <begin position="263"/>
        <end position="271"/>
    </location>
</feature>
<feature type="strand" evidence="17">
    <location>
        <begin position="273"/>
        <end position="275"/>
    </location>
</feature>
<feature type="strand" evidence="19">
    <location>
        <begin position="279"/>
        <end position="283"/>
    </location>
</feature>
<feature type="strand" evidence="19">
    <location>
        <begin position="300"/>
        <end position="305"/>
    </location>
</feature>
<feature type="strand" evidence="16">
    <location>
        <begin position="311"/>
        <end position="313"/>
    </location>
</feature>
<feature type="strand" evidence="19">
    <location>
        <begin position="314"/>
        <end position="316"/>
    </location>
</feature>
<feature type="strand" evidence="19">
    <location>
        <begin position="318"/>
        <end position="325"/>
    </location>
</feature>
<feature type="turn" evidence="18">
    <location>
        <begin position="333"/>
        <end position="335"/>
    </location>
</feature>
<feature type="strand" evidence="19">
    <location>
        <begin position="336"/>
        <end position="345"/>
    </location>
</feature>
<feature type="helix" evidence="19">
    <location>
        <begin position="358"/>
        <end position="360"/>
    </location>
</feature>
<feature type="turn" evidence="19">
    <location>
        <begin position="362"/>
        <end position="364"/>
    </location>
</feature>
<feature type="strand" evidence="19">
    <location>
        <begin position="365"/>
        <end position="371"/>
    </location>
</feature>
<feature type="helix" evidence="19">
    <location>
        <begin position="373"/>
        <end position="376"/>
    </location>
</feature>
<feature type="strand" evidence="16">
    <location>
        <begin position="385"/>
        <end position="388"/>
    </location>
</feature>
<feature type="helix" evidence="19">
    <location>
        <begin position="395"/>
        <end position="408"/>
    </location>
</feature>
<feature type="strand" evidence="19">
    <location>
        <begin position="417"/>
        <end position="420"/>
    </location>
</feature>
<feature type="strand" evidence="19">
    <location>
        <begin position="426"/>
        <end position="429"/>
    </location>
</feature>
<feature type="strand" evidence="19">
    <location>
        <begin position="435"/>
        <end position="438"/>
    </location>
</feature>
<feature type="helix" evidence="19">
    <location>
        <begin position="440"/>
        <end position="442"/>
    </location>
</feature>
<feature type="strand" evidence="16">
    <location>
        <begin position="444"/>
        <end position="446"/>
    </location>
</feature>
<evidence type="ECO:0000255" key="1">
    <source>
        <dbReference type="PROSITE-ProRule" id="PRU00477"/>
    </source>
</evidence>
<evidence type="ECO:0000256" key="2">
    <source>
        <dbReference type="SAM" id="MobiDB-lite"/>
    </source>
</evidence>
<evidence type="ECO:0000269" key="3">
    <source>
    </source>
</evidence>
<evidence type="ECO:0000269" key="4">
    <source>
    </source>
</evidence>
<evidence type="ECO:0000269" key="5">
    <source>
    </source>
</evidence>
<evidence type="ECO:0000269" key="6">
    <source>
    </source>
</evidence>
<evidence type="ECO:0000269" key="7">
    <source>
    </source>
</evidence>
<evidence type="ECO:0000269" key="8">
    <source>
    </source>
</evidence>
<evidence type="ECO:0000303" key="9">
    <source>
    </source>
</evidence>
<evidence type="ECO:0000303" key="10">
    <source>
    </source>
</evidence>
<evidence type="ECO:0000305" key="11"/>
<evidence type="ECO:0000305" key="12">
    <source>
    </source>
</evidence>
<evidence type="ECO:0000305" key="13">
    <source>
    </source>
</evidence>
<evidence type="ECO:0007744" key="14">
    <source>
        <dbReference type="PDB" id="6EFC"/>
    </source>
</evidence>
<evidence type="ECO:0007744" key="15">
    <source>
        <dbReference type="PDB" id="6EFD"/>
    </source>
</evidence>
<evidence type="ECO:0007829" key="16">
    <source>
        <dbReference type="PDB" id="6EFC"/>
    </source>
</evidence>
<evidence type="ECO:0007829" key="17">
    <source>
        <dbReference type="PDB" id="6X3K"/>
    </source>
</evidence>
<evidence type="ECO:0007829" key="18">
    <source>
        <dbReference type="PDB" id="6X3Q"/>
    </source>
</evidence>
<evidence type="ECO:0007829" key="19">
    <source>
        <dbReference type="PDB" id="7KMJ"/>
    </source>
</evidence>
<proteinExistence type="evidence at protein level"/>
<dbReference type="EMBL" id="AB029393">
    <property type="protein sequence ID" value="BAA97453.1"/>
    <property type="molecule type" value="Genomic_DNA"/>
</dbReference>
<dbReference type="EMBL" id="CP000725">
    <property type="protein sequence ID" value="ABV10391.1"/>
    <property type="molecule type" value="Genomic_DNA"/>
</dbReference>
<dbReference type="RefSeq" id="WP_012000387.1">
    <property type="nucleotide sequence ID" value="NC_009785.1"/>
</dbReference>
<dbReference type="PDB" id="6EFC">
    <property type="method" value="X-ray"/>
    <property type="resolution" value="1.40 A"/>
    <property type="chains" value="A=220-453"/>
</dbReference>
<dbReference type="PDB" id="6EFD">
    <property type="method" value="X-ray"/>
    <property type="resolution" value="1.85 A"/>
    <property type="chains" value="A=220-453"/>
</dbReference>
<dbReference type="PDB" id="6X3K">
    <property type="method" value="X-ray"/>
    <property type="resolution" value="2.50 A"/>
    <property type="chains" value="A=220-453"/>
</dbReference>
<dbReference type="PDB" id="6X3Q">
    <property type="method" value="X-ray"/>
    <property type="resolution" value="2.15 A"/>
    <property type="chains" value="A=220-453"/>
</dbReference>
<dbReference type="PDB" id="7KMJ">
    <property type="method" value="X-ray"/>
    <property type="resolution" value="1.33 A"/>
    <property type="chains" value="A=220-453"/>
</dbReference>
<dbReference type="PDB" id="8ST5">
    <property type="method" value="X-ray"/>
    <property type="resolution" value="1.45 A"/>
    <property type="chains" value="A=220-453"/>
</dbReference>
<dbReference type="PDB" id="8ST6">
    <property type="method" value="X-ray"/>
    <property type="resolution" value="1.45 A"/>
    <property type="chains" value="A=220-453"/>
</dbReference>
<dbReference type="PDBsum" id="6EFC"/>
<dbReference type="PDBsum" id="6EFD"/>
<dbReference type="PDBsum" id="6X3K"/>
<dbReference type="PDBsum" id="6X3Q"/>
<dbReference type="PDBsum" id="7KMJ"/>
<dbReference type="PDBsum" id="8ST5"/>
<dbReference type="PDBsum" id="8ST6"/>
<dbReference type="SMR" id="A8AWU7"/>
<dbReference type="STRING" id="467705.SGO_0966"/>
<dbReference type="UniLectin" id="A8AWU7"/>
<dbReference type="KEGG" id="sgo:SGO_0966"/>
<dbReference type="eggNOG" id="COG3147">
    <property type="taxonomic scope" value="Bacteria"/>
</dbReference>
<dbReference type="eggNOG" id="COG5295">
    <property type="taxonomic scope" value="Bacteria"/>
</dbReference>
<dbReference type="HOGENOM" id="CLU_227392_0_0_9"/>
<dbReference type="Proteomes" id="UP000001131">
    <property type="component" value="Chromosome"/>
</dbReference>
<dbReference type="GO" id="GO:0005576">
    <property type="term" value="C:extracellular region"/>
    <property type="evidence" value="ECO:0007669"/>
    <property type="project" value="UniProtKB-KW"/>
</dbReference>
<dbReference type="GO" id="GO:0098785">
    <property type="term" value="P:biofilm matrix assembly"/>
    <property type="evidence" value="ECO:0000315"/>
    <property type="project" value="UniProtKB"/>
</dbReference>
<dbReference type="GO" id="GO:0007155">
    <property type="term" value="P:cell adhesion"/>
    <property type="evidence" value="ECO:0007669"/>
    <property type="project" value="UniProtKB-KW"/>
</dbReference>
<dbReference type="GO" id="GO:0090604">
    <property type="term" value="P:surface biofilm formation"/>
    <property type="evidence" value="ECO:0000315"/>
    <property type="project" value="UniProtKB"/>
</dbReference>
<dbReference type="Gene3D" id="2.60.40.4140">
    <property type="match status" value="1"/>
</dbReference>
<dbReference type="Gene3D" id="3.10.20.890">
    <property type="match status" value="1"/>
</dbReference>
<dbReference type="InterPro" id="IPR044024">
    <property type="entry name" value="aRib"/>
</dbReference>
<dbReference type="InterPro" id="IPR022263">
    <property type="entry name" value="KxYKxGKxW"/>
</dbReference>
<dbReference type="InterPro" id="IPR019931">
    <property type="entry name" value="LPXTG_anchor"/>
</dbReference>
<dbReference type="InterPro" id="IPR026465">
    <property type="entry name" value="Ser_adhes_glycop_N"/>
</dbReference>
<dbReference type="InterPro" id="IPR046785">
    <property type="entry name" value="SrpA-like_SigLec-like_dom"/>
</dbReference>
<dbReference type="NCBIfam" id="TIGR03715">
    <property type="entry name" value="KxYKxGKxW"/>
    <property type="match status" value="1"/>
</dbReference>
<dbReference type="NCBIfam" id="TIGR01167">
    <property type="entry name" value="LPXTG_anchor"/>
    <property type="match status" value="1"/>
</dbReference>
<dbReference type="NCBIfam" id="TIGR04224">
    <property type="entry name" value="ser_adhes_Nterm"/>
    <property type="match status" value="1"/>
</dbReference>
<dbReference type="Pfam" id="PF18938">
    <property type="entry name" value="aRib"/>
    <property type="match status" value="1"/>
</dbReference>
<dbReference type="Pfam" id="PF00746">
    <property type="entry name" value="Gram_pos_anchor"/>
    <property type="match status" value="1"/>
</dbReference>
<dbReference type="Pfam" id="PF20164">
    <property type="entry name" value="GspA_SrpA_N"/>
    <property type="match status" value="1"/>
</dbReference>
<dbReference type="Pfam" id="PF19258">
    <property type="entry name" value="KxYKxGKxW_sig"/>
    <property type="match status" value="1"/>
</dbReference>
<dbReference type="PROSITE" id="PS50847">
    <property type="entry name" value="GRAM_POS_ANCHORING"/>
    <property type="match status" value="1"/>
</dbReference>
<comment type="function">
    <text evidence="3 5 7 12">A cell wall protein involved with PadA in host cell interactions required for colonization and pathogensis (Probable) (PubMed:19884334, PubMed:27616700). Mediates hemagglutination and adherence to ghst glycoproteins (PubMed:11854202). Recognizes fetuin-A (AHSG), a highly glycosylated human plasma protein, also involved in recognition of human platelets, probably via platelet glycoprotein Ib alpha (GP1BA) (PubMed:19884334). Acts in concert with PadA to promote binding to glycosylated human fibronectin (FN1) and vitronectin (VTN), and biofilm formation. Plays a major role in fibronectin and vitronectin binding; binding is mediated by glycosylated regions. Probably mediates interaction of PadA with resting platelets (PubMed:27616700).</text>
</comment>
<comment type="subcellular location">
    <subcellularLocation>
        <location evidence="1 4 5">Secreted</location>
        <location evidence="1 4 5">Cell wall</location>
        <topology evidence="1">Peptidoglycan-anchor</topology>
    </subcellularLocation>
</comment>
<comment type="domain">
    <text evidence="3 4 12">Has a short (SR1) and long (SR22) Ser-rich region separated by 2 non-repeats regions (NR1 and NR2). SR2 is comprised of 113 inexact repeats of SASTSASVSASE (PubMed:11854202). SR2 is thought to extend about 0.2 um away from the cell surface (Probable). SR1, NR2 and SR2 are essential for Hsa-mediated hemagglutination and for binding to sialoglycoconjugates (fetuin and NeuAc-alpha-2-3Gal-beta-1-4(Glc)-HSA); removal of the N- or C-terminus of SR2 (residues 448-1459 or 1092-2143 respectively) still allows binding and hemagglutination (PubMed:15213130).</text>
</comment>
<comment type="PTM">
    <text evidence="4 7">The protein is glycosylated in vivo; constructs without SR1 and SR2 are not glycosylated.</text>
</comment>
<comment type="disruption phenotype">
    <text evidence="3 4 5 6 7">Loss of bacterial-mediated red blood cell hemagglutination, no bacterial adhesion to glycoconjugates with alpha-2-3 sialic acid termini (PubMed:11854202). No longer aggregates human platelets (PubMed:15213130). Bacteria no longer bind human fetuin. Bacteria bind less well to human platelets. Triple sspA-sspB-hsa deletion no longer causes human platelet aggregation; a single hsa deletion aggregates platelets normally. Significantly reduced binding to human glycocalicin (GP1BA, the shed form of platelet glycoprotein Ib alpha) (PubMed:19884334). No change in platelet spreading on S.gordonii (PubMed:21071690). Single mutant no longer binds to vitronectin (VTN) and fibronectin (FN1), slightly less well to salivary pellicle and makes less biofilm on salivary pellicle. Double hsa-padA deletions bind less well to human platelets than does the single padA deletion and make no biofilm on salivary pellicle (PubMed:27616700).</text>
</comment>
<comment type="miscellaneous">
    <text evidence="8">S.gordonii, a commensal oral cavity bacteria, is among the bacteria most frequently identified as being the primary etiological agents of subacute infective endocarditis (found in 13% of cases).</text>
</comment>
<comment type="similarity">
    <text evidence="11">Belongs to the serine-rich repeat protein (SRRP) family.</text>
</comment>
<name>HSA_STRGC</name>